<reference key="1">
    <citation type="submission" date="2007-06" db="EMBL/GenBank/DDBJ databases">
        <title>Identification of Kunitz-type serine protease inhibitors from the venom glands of Australian elapid snakes.</title>
        <authorList>
            <person name="St Pierre L."/>
            <person name="Earl S."/>
        </authorList>
    </citation>
    <scope>NUCLEOTIDE SEQUENCE [MRNA]</scope>
    <source>
        <tissue>Venom gland</tissue>
    </source>
</reference>
<dbReference type="EMBL" id="EF990739">
    <property type="protein sequence ID" value="ABV64393.1"/>
    <property type="molecule type" value="mRNA"/>
</dbReference>
<dbReference type="SMR" id="B5KL31"/>
<dbReference type="MEROPS" id="I02.052"/>
<dbReference type="GO" id="GO:0005615">
    <property type="term" value="C:extracellular space"/>
    <property type="evidence" value="ECO:0007669"/>
    <property type="project" value="TreeGrafter"/>
</dbReference>
<dbReference type="GO" id="GO:0004867">
    <property type="term" value="F:serine-type endopeptidase inhibitor activity"/>
    <property type="evidence" value="ECO:0007669"/>
    <property type="project" value="UniProtKB-KW"/>
</dbReference>
<dbReference type="CDD" id="cd22594">
    <property type="entry name" value="Kunitz_textilinin-like"/>
    <property type="match status" value="1"/>
</dbReference>
<dbReference type="FunFam" id="4.10.410.10:FF:000021">
    <property type="entry name" value="Serine protease inhibitor, putative"/>
    <property type="match status" value="1"/>
</dbReference>
<dbReference type="Gene3D" id="4.10.410.10">
    <property type="entry name" value="Pancreatic trypsin inhibitor Kunitz domain"/>
    <property type="match status" value="1"/>
</dbReference>
<dbReference type="InterPro" id="IPR002223">
    <property type="entry name" value="Kunitz_BPTI"/>
</dbReference>
<dbReference type="InterPro" id="IPR036880">
    <property type="entry name" value="Kunitz_BPTI_sf"/>
</dbReference>
<dbReference type="InterPro" id="IPR020901">
    <property type="entry name" value="Prtase_inh_Kunz-CS"/>
</dbReference>
<dbReference type="InterPro" id="IPR050098">
    <property type="entry name" value="TFPI/VKTCI-like"/>
</dbReference>
<dbReference type="PANTHER" id="PTHR10083:SF374">
    <property type="entry name" value="BPTI_KUNITZ INHIBITOR DOMAIN-CONTAINING PROTEIN"/>
    <property type="match status" value="1"/>
</dbReference>
<dbReference type="PANTHER" id="PTHR10083">
    <property type="entry name" value="KUNITZ-TYPE PROTEASE INHIBITOR-RELATED"/>
    <property type="match status" value="1"/>
</dbReference>
<dbReference type="Pfam" id="PF00014">
    <property type="entry name" value="Kunitz_BPTI"/>
    <property type="match status" value="1"/>
</dbReference>
<dbReference type="PRINTS" id="PR00759">
    <property type="entry name" value="BASICPTASE"/>
</dbReference>
<dbReference type="SMART" id="SM00131">
    <property type="entry name" value="KU"/>
    <property type="match status" value="1"/>
</dbReference>
<dbReference type="SUPFAM" id="SSF57362">
    <property type="entry name" value="BPTI-like"/>
    <property type="match status" value="1"/>
</dbReference>
<dbReference type="PROSITE" id="PS00280">
    <property type="entry name" value="BPTI_KUNITZ_1"/>
    <property type="match status" value="1"/>
</dbReference>
<dbReference type="PROSITE" id="PS50279">
    <property type="entry name" value="BPTI_KUNITZ_2"/>
    <property type="match status" value="1"/>
</dbReference>
<keyword id="KW-1015">Disulfide bond</keyword>
<keyword id="KW-0646">Protease inhibitor</keyword>
<keyword id="KW-0964">Secreted</keyword>
<keyword id="KW-0722">Serine protease inhibitor</keyword>
<keyword id="KW-0732">Signal</keyword>
<protein>
    <recommendedName>
        <fullName>Kunitz-type serine protease inhibitor blackelin-3</fullName>
    </recommendedName>
</protein>
<sequence>MSSGGLLLLLGLLTLWEVLTPVSSKDRPKFCELPADPGPCNGLFQAFYYNPVQRKCLKFRYGGCKANPNTFKTIEECKRICAA</sequence>
<proteinExistence type="evidence at transcript level"/>
<feature type="signal peptide" evidence="2">
    <location>
        <begin position="1"/>
        <end position="24"/>
    </location>
</feature>
<feature type="chain" id="PRO_5000395590" description="Kunitz-type serine protease inhibitor blackelin-3">
    <location>
        <begin position="25"/>
        <end position="83"/>
    </location>
</feature>
<feature type="domain" description="BPTI/Kunitz inhibitor" evidence="3">
    <location>
        <begin position="31"/>
        <end position="81"/>
    </location>
</feature>
<feature type="site" description="Reactive bond for chymotrypsin" evidence="1">
    <location>
        <begin position="41"/>
        <end position="42"/>
    </location>
</feature>
<feature type="disulfide bond" evidence="3">
    <location>
        <begin position="31"/>
        <end position="81"/>
    </location>
</feature>
<feature type="disulfide bond" evidence="3">
    <location>
        <begin position="40"/>
        <end position="64"/>
    </location>
</feature>
<feature type="disulfide bond" evidence="3">
    <location>
        <begin position="56"/>
        <end position="77"/>
    </location>
</feature>
<comment type="function">
    <text evidence="1">Serine protease inhibitor.</text>
</comment>
<comment type="subcellular location">
    <subcellularLocation>
        <location evidence="1">Secreted</location>
    </subcellularLocation>
</comment>
<comment type="tissue specificity">
    <text>Expressed by the venom gland.</text>
</comment>
<comment type="similarity">
    <text evidence="4">Belongs to the venom Kunitz-type family.</text>
</comment>
<name>VKT3_PSEPO</name>
<organism>
    <name type="scientific">Pseudechis porphyriacus</name>
    <name type="common">Red-bellied black snake</name>
    <dbReference type="NCBI Taxonomy" id="8671"/>
    <lineage>
        <taxon>Eukaryota</taxon>
        <taxon>Metazoa</taxon>
        <taxon>Chordata</taxon>
        <taxon>Craniata</taxon>
        <taxon>Vertebrata</taxon>
        <taxon>Euteleostomi</taxon>
        <taxon>Lepidosauria</taxon>
        <taxon>Squamata</taxon>
        <taxon>Bifurcata</taxon>
        <taxon>Unidentata</taxon>
        <taxon>Episquamata</taxon>
        <taxon>Toxicofera</taxon>
        <taxon>Serpentes</taxon>
        <taxon>Colubroidea</taxon>
        <taxon>Elapidae</taxon>
        <taxon>Hydrophiinae</taxon>
        <taxon>Pseudechis</taxon>
    </lineage>
</organism>
<accession>B5KL31</accession>
<evidence type="ECO:0000250" key="1"/>
<evidence type="ECO:0000255" key="2"/>
<evidence type="ECO:0000255" key="3">
    <source>
        <dbReference type="PROSITE-ProRule" id="PRU00031"/>
    </source>
</evidence>
<evidence type="ECO:0000305" key="4"/>